<dbReference type="EMBL" id="CP000826">
    <property type="protein sequence ID" value="ABV43889.1"/>
    <property type="molecule type" value="Genomic_DNA"/>
</dbReference>
<dbReference type="SMR" id="A8GL99"/>
<dbReference type="STRING" id="399741.Spro_4796"/>
<dbReference type="KEGG" id="spe:Spro_4796"/>
<dbReference type="eggNOG" id="COG3074">
    <property type="taxonomic scope" value="Bacteria"/>
</dbReference>
<dbReference type="HOGENOM" id="CLU_171174_2_0_6"/>
<dbReference type="OrthoDB" id="6554593at2"/>
<dbReference type="GO" id="GO:0005737">
    <property type="term" value="C:cytoplasm"/>
    <property type="evidence" value="ECO:0007669"/>
    <property type="project" value="UniProtKB-SubCell"/>
</dbReference>
<dbReference type="GO" id="GO:0000917">
    <property type="term" value="P:division septum assembly"/>
    <property type="evidence" value="ECO:0007669"/>
    <property type="project" value="UniProtKB-KW"/>
</dbReference>
<dbReference type="GO" id="GO:0043093">
    <property type="term" value="P:FtsZ-dependent cytokinesis"/>
    <property type="evidence" value="ECO:0007669"/>
    <property type="project" value="UniProtKB-UniRule"/>
</dbReference>
<dbReference type="Gene3D" id="1.20.5.340">
    <property type="match status" value="1"/>
</dbReference>
<dbReference type="HAMAP" id="MF_01196">
    <property type="entry name" value="ZapB"/>
    <property type="match status" value="1"/>
</dbReference>
<dbReference type="InterPro" id="IPR009252">
    <property type="entry name" value="Cell_div_ZapB"/>
</dbReference>
<dbReference type="NCBIfam" id="NF011951">
    <property type="entry name" value="PRK15422.1"/>
    <property type="match status" value="1"/>
</dbReference>
<dbReference type="Pfam" id="PF06005">
    <property type="entry name" value="ZapB"/>
    <property type="match status" value="1"/>
</dbReference>
<name>ZAPB_SERP5</name>
<accession>A8GL99</accession>
<protein>
    <recommendedName>
        <fullName evidence="1">Cell division protein ZapB</fullName>
    </recommendedName>
</protein>
<organism>
    <name type="scientific">Serratia proteamaculans (strain 568)</name>
    <dbReference type="NCBI Taxonomy" id="399741"/>
    <lineage>
        <taxon>Bacteria</taxon>
        <taxon>Pseudomonadati</taxon>
        <taxon>Pseudomonadota</taxon>
        <taxon>Gammaproteobacteria</taxon>
        <taxon>Enterobacterales</taxon>
        <taxon>Yersiniaceae</taxon>
        <taxon>Serratia</taxon>
    </lineage>
</organism>
<evidence type="ECO:0000255" key="1">
    <source>
        <dbReference type="HAMAP-Rule" id="MF_01196"/>
    </source>
</evidence>
<sequence>MSFEVFEKLESKVQQAIDTITLLQMEIEELKDKNNTLSQEVQAASGNHESLVRENQQLKEEQHVWQDRLRALLGKMEEV</sequence>
<reference key="1">
    <citation type="submission" date="2007-09" db="EMBL/GenBank/DDBJ databases">
        <title>Complete sequence of chromosome of Serratia proteamaculans 568.</title>
        <authorList>
            <consortium name="US DOE Joint Genome Institute"/>
            <person name="Copeland A."/>
            <person name="Lucas S."/>
            <person name="Lapidus A."/>
            <person name="Barry K."/>
            <person name="Glavina del Rio T."/>
            <person name="Dalin E."/>
            <person name="Tice H."/>
            <person name="Pitluck S."/>
            <person name="Chain P."/>
            <person name="Malfatti S."/>
            <person name="Shin M."/>
            <person name="Vergez L."/>
            <person name="Schmutz J."/>
            <person name="Larimer F."/>
            <person name="Land M."/>
            <person name="Hauser L."/>
            <person name="Kyrpides N."/>
            <person name="Kim E."/>
            <person name="Taghavi S."/>
            <person name="Newman L."/>
            <person name="Vangronsveld J."/>
            <person name="van der Lelie D."/>
            <person name="Richardson P."/>
        </authorList>
    </citation>
    <scope>NUCLEOTIDE SEQUENCE [LARGE SCALE GENOMIC DNA]</scope>
    <source>
        <strain>568</strain>
    </source>
</reference>
<proteinExistence type="inferred from homology"/>
<keyword id="KW-0131">Cell cycle</keyword>
<keyword id="KW-0132">Cell division</keyword>
<keyword id="KW-0175">Coiled coil</keyword>
<keyword id="KW-0963">Cytoplasm</keyword>
<keyword id="KW-0717">Septation</keyword>
<feature type="chain" id="PRO_0000333920" description="Cell division protein ZapB">
    <location>
        <begin position="1"/>
        <end position="79"/>
    </location>
</feature>
<feature type="coiled-coil region" evidence="1">
    <location>
        <begin position="4"/>
        <end position="78"/>
    </location>
</feature>
<gene>
    <name evidence="1" type="primary">zapB</name>
    <name type="ordered locus">Spro_4796</name>
</gene>
<comment type="function">
    <text evidence="1">Non-essential, abundant cell division factor that is required for proper Z-ring formation. It is recruited early to the divisome by direct interaction with FtsZ, stimulating Z-ring assembly and thereby promoting cell division earlier in the cell cycle. Its recruitment to the Z-ring requires functional FtsA or ZipA.</text>
</comment>
<comment type="subunit">
    <text evidence="1">Homodimer. The ends of the coiled-coil dimer bind to each other, forming polymers. Interacts with FtsZ.</text>
</comment>
<comment type="subcellular location">
    <subcellularLocation>
        <location>Cytoplasm</location>
    </subcellularLocation>
    <text evidence="1">Localizes to the septum at mid-cell, in a FtsZ-like pattern.</text>
</comment>
<comment type="similarity">
    <text evidence="1">Belongs to the ZapB family.</text>
</comment>